<gene>
    <name evidence="1" type="primary">ureG</name>
    <name type="ordered locus">BQ2027_MB1883</name>
</gene>
<accession>P0A665</accession>
<accession>A0A1R3XZX3</accession>
<accession>P50051</accession>
<accession>X2BIN9</accession>
<organism>
    <name type="scientific">Mycobacterium bovis (strain ATCC BAA-935 / AF2122/97)</name>
    <dbReference type="NCBI Taxonomy" id="233413"/>
    <lineage>
        <taxon>Bacteria</taxon>
        <taxon>Bacillati</taxon>
        <taxon>Actinomycetota</taxon>
        <taxon>Actinomycetes</taxon>
        <taxon>Mycobacteriales</taxon>
        <taxon>Mycobacteriaceae</taxon>
        <taxon>Mycobacterium</taxon>
        <taxon>Mycobacterium tuberculosis complex</taxon>
    </lineage>
</organism>
<sequence>MATHSHPHSHTVPARPRRVRKPGEPLRIGVGGPVGSGKTALVAALCRQLRGELSLAVLTNDIYTTEDADFLRTHAVLPDDRIAAVQTGGCPHTAIRDDITANLDAIDELMAAHDALDLILVESGGDNLTATFSSGLVDAQIFVIDVAGGDKVPRKGGPGVTYSDLLVVNKTDLAALVGADLAVMARDADAVRDGRPTVLQSLTEDPAASDVVAWVRSQLAADGV</sequence>
<feature type="chain" id="PRO_0000067670" description="Urease accessory protein UreG">
    <location>
        <begin position="1"/>
        <end position="224"/>
    </location>
</feature>
<feature type="region of interest" description="Disordered" evidence="2">
    <location>
        <begin position="1"/>
        <end position="25"/>
    </location>
</feature>
<feature type="compositionally biased region" description="Basic residues" evidence="2">
    <location>
        <begin position="1"/>
        <end position="20"/>
    </location>
</feature>
<feature type="binding site" evidence="1">
    <location>
        <begin position="32"/>
        <end position="39"/>
    </location>
    <ligand>
        <name>GTP</name>
        <dbReference type="ChEBI" id="CHEBI:37565"/>
    </ligand>
</feature>
<reference key="1">
    <citation type="journal article" date="2003" name="Proc. Natl. Acad. Sci. U.S.A.">
        <title>The complete genome sequence of Mycobacterium bovis.</title>
        <authorList>
            <person name="Garnier T."/>
            <person name="Eiglmeier K."/>
            <person name="Camus J.-C."/>
            <person name="Medina N."/>
            <person name="Mansoor H."/>
            <person name="Pryor M."/>
            <person name="Duthoy S."/>
            <person name="Grondin S."/>
            <person name="Lacroix C."/>
            <person name="Monsempe C."/>
            <person name="Simon S."/>
            <person name="Harris B."/>
            <person name="Atkin R."/>
            <person name="Doggett J."/>
            <person name="Mayes R."/>
            <person name="Keating L."/>
            <person name="Wheeler P.R."/>
            <person name="Parkhill J."/>
            <person name="Barrell B.G."/>
            <person name="Cole S.T."/>
            <person name="Gordon S.V."/>
            <person name="Hewinson R.G."/>
        </authorList>
    </citation>
    <scope>NUCLEOTIDE SEQUENCE [LARGE SCALE GENOMIC DNA]</scope>
    <source>
        <strain>ATCC BAA-935 / AF2122/97</strain>
    </source>
</reference>
<reference key="2">
    <citation type="journal article" date="2017" name="Genome Announc.">
        <title>Updated reference genome sequence and annotation of Mycobacterium bovis AF2122/97.</title>
        <authorList>
            <person name="Malone K.M."/>
            <person name="Farrell D."/>
            <person name="Stuber T.P."/>
            <person name="Schubert O.T."/>
            <person name="Aebersold R."/>
            <person name="Robbe-Austerman S."/>
            <person name="Gordon S.V."/>
        </authorList>
    </citation>
    <scope>NUCLEOTIDE SEQUENCE [LARGE SCALE GENOMIC DNA]</scope>
    <scope>GENOME REANNOTATION</scope>
    <source>
        <strain>ATCC BAA-935 / AF2122/97</strain>
    </source>
</reference>
<evidence type="ECO:0000255" key="1">
    <source>
        <dbReference type="HAMAP-Rule" id="MF_01389"/>
    </source>
</evidence>
<evidence type="ECO:0000256" key="2">
    <source>
        <dbReference type="SAM" id="MobiDB-lite"/>
    </source>
</evidence>
<protein>
    <recommendedName>
        <fullName evidence="1">Urease accessory protein UreG</fullName>
    </recommendedName>
</protein>
<keyword id="KW-0143">Chaperone</keyword>
<keyword id="KW-0963">Cytoplasm</keyword>
<keyword id="KW-0342">GTP-binding</keyword>
<keyword id="KW-0996">Nickel insertion</keyword>
<keyword id="KW-0547">Nucleotide-binding</keyword>
<keyword id="KW-1185">Reference proteome</keyword>
<name>UREG_MYCBO</name>
<comment type="function">
    <text evidence="1">Facilitates the functional incorporation of the urease nickel metallocenter. This process requires GTP hydrolysis, probably effectuated by UreG.</text>
</comment>
<comment type="subunit">
    <text evidence="1">Homodimer. UreD, UreF and UreG form a complex that acts as a GTP-hydrolysis-dependent molecular chaperone, activating the urease apoprotein by helping to assemble the nickel containing metallocenter of UreC. The UreE protein probably delivers the nickel.</text>
</comment>
<comment type="subcellular location">
    <subcellularLocation>
        <location evidence="1">Cytoplasm</location>
    </subcellularLocation>
</comment>
<comment type="similarity">
    <text evidence="1">Belongs to the SIMIBI class G3E GTPase family. UreG subfamily.</text>
</comment>
<dbReference type="EMBL" id="LT708304">
    <property type="protein sequence ID" value="SIU00487.1"/>
    <property type="molecule type" value="Genomic_DNA"/>
</dbReference>
<dbReference type="RefSeq" id="NP_855535.1">
    <property type="nucleotide sequence ID" value="NC_002945.3"/>
</dbReference>
<dbReference type="RefSeq" id="WP_003409313.1">
    <property type="nucleotide sequence ID" value="NC_002945.4"/>
</dbReference>
<dbReference type="SMR" id="P0A665"/>
<dbReference type="KEGG" id="mbo:BQ2027_MB1883"/>
<dbReference type="PATRIC" id="fig|233413.5.peg.2064"/>
<dbReference type="Proteomes" id="UP000001419">
    <property type="component" value="Chromosome"/>
</dbReference>
<dbReference type="GO" id="GO:0005737">
    <property type="term" value="C:cytoplasm"/>
    <property type="evidence" value="ECO:0007669"/>
    <property type="project" value="UniProtKB-SubCell"/>
</dbReference>
<dbReference type="GO" id="GO:0005525">
    <property type="term" value="F:GTP binding"/>
    <property type="evidence" value="ECO:0007669"/>
    <property type="project" value="UniProtKB-KW"/>
</dbReference>
<dbReference type="GO" id="GO:0003924">
    <property type="term" value="F:GTPase activity"/>
    <property type="evidence" value="ECO:0007669"/>
    <property type="project" value="InterPro"/>
</dbReference>
<dbReference type="GO" id="GO:0016151">
    <property type="term" value="F:nickel cation binding"/>
    <property type="evidence" value="ECO:0007669"/>
    <property type="project" value="UniProtKB-UniRule"/>
</dbReference>
<dbReference type="GO" id="GO:0043419">
    <property type="term" value="P:urea catabolic process"/>
    <property type="evidence" value="ECO:0007669"/>
    <property type="project" value="InterPro"/>
</dbReference>
<dbReference type="CDD" id="cd05540">
    <property type="entry name" value="UreG"/>
    <property type="match status" value="1"/>
</dbReference>
<dbReference type="FunFam" id="3.40.50.300:FF:000208">
    <property type="entry name" value="Urease accessory protein UreG"/>
    <property type="match status" value="1"/>
</dbReference>
<dbReference type="Gene3D" id="3.40.50.300">
    <property type="entry name" value="P-loop containing nucleotide triphosphate hydrolases"/>
    <property type="match status" value="1"/>
</dbReference>
<dbReference type="HAMAP" id="MF_01389">
    <property type="entry name" value="UreG"/>
    <property type="match status" value="1"/>
</dbReference>
<dbReference type="InterPro" id="IPR003495">
    <property type="entry name" value="CobW/HypB/UreG_nucleotide-bd"/>
</dbReference>
<dbReference type="InterPro" id="IPR027417">
    <property type="entry name" value="P-loop_NTPase"/>
</dbReference>
<dbReference type="InterPro" id="IPR004400">
    <property type="entry name" value="UreG"/>
</dbReference>
<dbReference type="NCBIfam" id="TIGR00101">
    <property type="entry name" value="ureG"/>
    <property type="match status" value="1"/>
</dbReference>
<dbReference type="PANTHER" id="PTHR31715">
    <property type="entry name" value="UREASE ACCESSORY PROTEIN G"/>
    <property type="match status" value="1"/>
</dbReference>
<dbReference type="PANTHER" id="PTHR31715:SF0">
    <property type="entry name" value="UREASE ACCESSORY PROTEIN G"/>
    <property type="match status" value="1"/>
</dbReference>
<dbReference type="Pfam" id="PF02492">
    <property type="entry name" value="cobW"/>
    <property type="match status" value="1"/>
</dbReference>
<dbReference type="PIRSF" id="PIRSF005624">
    <property type="entry name" value="Ni-bind_GTPase"/>
    <property type="match status" value="1"/>
</dbReference>
<dbReference type="SUPFAM" id="SSF52540">
    <property type="entry name" value="P-loop containing nucleoside triphosphate hydrolases"/>
    <property type="match status" value="1"/>
</dbReference>
<proteinExistence type="inferred from homology"/>